<dbReference type="EC" id="3.1.6.1" evidence="6 9 10"/>
<dbReference type="EC" id="3.1.6.14" evidence="6 9 10"/>
<dbReference type="EMBL" id="AY101176">
    <property type="protein sequence ID" value="AAM76861.1"/>
    <property type="molecule type" value="mRNA"/>
</dbReference>
<dbReference type="EMBL" id="AB033073">
    <property type="protein sequence ID" value="BAA86561.2"/>
    <property type="status" value="ALT_INIT"/>
    <property type="molecule type" value="mRNA"/>
</dbReference>
<dbReference type="EMBL" id="AY358461">
    <property type="protein sequence ID" value="AAQ88826.1"/>
    <property type="molecule type" value="mRNA"/>
</dbReference>
<dbReference type="EMBL" id="CR749319">
    <property type="protein sequence ID" value="CAH18174.1"/>
    <property type="molecule type" value="mRNA"/>
</dbReference>
<dbReference type="EMBL" id="AL354813">
    <property type="status" value="NOT_ANNOTATED_CDS"/>
    <property type="molecule type" value="Genomic_DNA"/>
</dbReference>
<dbReference type="EMBL" id="AL034418">
    <property type="status" value="NOT_ANNOTATED_CDS"/>
    <property type="molecule type" value="Genomic_DNA"/>
</dbReference>
<dbReference type="EMBL" id="CH471077">
    <property type="protein sequence ID" value="EAW75690.1"/>
    <property type="molecule type" value="Genomic_DNA"/>
</dbReference>
<dbReference type="EMBL" id="CH471077">
    <property type="protein sequence ID" value="EAW75693.1"/>
    <property type="molecule type" value="Genomic_DNA"/>
</dbReference>
<dbReference type="EMBL" id="CH471077">
    <property type="protein sequence ID" value="EAW75694.1"/>
    <property type="molecule type" value="Genomic_DNA"/>
</dbReference>
<dbReference type="EMBL" id="CH471077">
    <property type="protein sequence ID" value="EAW75695.1"/>
    <property type="molecule type" value="Genomic_DNA"/>
</dbReference>
<dbReference type="EMBL" id="BC020962">
    <property type="protein sequence ID" value="AAH20962.1"/>
    <property type="status" value="ALT_INIT"/>
    <property type="molecule type" value="mRNA"/>
</dbReference>
<dbReference type="EMBL" id="BC110539">
    <property type="protein sequence ID" value="AAI10540.1"/>
    <property type="molecule type" value="mRNA"/>
</dbReference>
<dbReference type="EMBL" id="AL133001">
    <property type="protein sequence ID" value="CAB61349.1"/>
    <property type="status" value="ALT_INIT"/>
    <property type="molecule type" value="mRNA"/>
</dbReference>
<dbReference type="CCDS" id="CCDS13408.1">
    <molecule id="Q8IWU5-1"/>
</dbReference>
<dbReference type="CCDS" id="CCDS13409.2">
    <molecule id="Q8IWU5-2"/>
</dbReference>
<dbReference type="RefSeq" id="NP_001155313.1">
    <molecule id="Q8IWU5-1"/>
    <property type="nucleotide sequence ID" value="NM_001161841.2"/>
</dbReference>
<dbReference type="RefSeq" id="NP_001373977.1">
    <molecule id="Q8IWU5-1"/>
    <property type="nucleotide sequence ID" value="NM_001387048.1"/>
</dbReference>
<dbReference type="RefSeq" id="NP_001373978.1">
    <molecule id="Q8IWU5-1"/>
    <property type="nucleotide sequence ID" value="NM_001387049.1"/>
</dbReference>
<dbReference type="RefSeq" id="NP_061325.1">
    <molecule id="Q8IWU5-1"/>
    <property type="nucleotide sequence ID" value="NM_018837.4"/>
</dbReference>
<dbReference type="RefSeq" id="NP_940998.2">
    <molecule id="Q8IWU5-2"/>
    <property type="nucleotide sequence ID" value="NM_198596.3"/>
</dbReference>
<dbReference type="RefSeq" id="XP_005260515.1">
    <property type="nucleotide sequence ID" value="XM_005260458.2"/>
</dbReference>
<dbReference type="RefSeq" id="XP_006723893.1">
    <property type="nucleotide sequence ID" value="XM_006723830.1"/>
</dbReference>
<dbReference type="RefSeq" id="XP_016883444.1">
    <property type="nucleotide sequence ID" value="XM_017027955.1"/>
</dbReference>
<dbReference type="RefSeq" id="XP_047296252.1">
    <molecule id="Q8IWU5-1"/>
    <property type="nucleotide sequence ID" value="XM_047440296.1"/>
</dbReference>
<dbReference type="RefSeq" id="XP_054179678.1">
    <molecule id="Q8IWU5-1"/>
    <property type="nucleotide sequence ID" value="XM_054323703.1"/>
</dbReference>
<dbReference type="SMR" id="Q8IWU5"/>
<dbReference type="BioGRID" id="121010">
    <property type="interactions" value="126"/>
</dbReference>
<dbReference type="FunCoup" id="Q8IWU5">
    <property type="interactions" value="742"/>
</dbReference>
<dbReference type="IntAct" id="Q8IWU5">
    <property type="interactions" value="108"/>
</dbReference>
<dbReference type="MINT" id="Q8IWU5"/>
<dbReference type="STRING" id="9606.ENSP00000353007"/>
<dbReference type="DrugBank" id="DB17298">
    <property type="generic name" value="Disufenton"/>
</dbReference>
<dbReference type="GlyConnect" id="1232">
    <property type="glycosylation" value="6 N-Linked glycans (4 sites)"/>
</dbReference>
<dbReference type="GlyCosmos" id="Q8IWU5">
    <property type="glycosylation" value="12 sites, 6 glycans"/>
</dbReference>
<dbReference type="GlyGen" id="Q8IWU5">
    <property type="glycosylation" value="16 sites, 19 N-linked glycans (7 sites), 1 O-linked glycan (3 sites)"/>
</dbReference>
<dbReference type="iPTMnet" id="Q8IWU5"/>
<dbReference type="PhosphoSitePlus" id="Q8IWU5"/>
<dbReference type="BioMuta" id="SULF2"/>
<dbReference type="DMDM" id="33112446"/>
<dbReference type="jPOST" id="Q8IWU5"/>
<dbReference type="MassIVE" id="Q8IWU5"/>
<dbReference type="PaxDb" id="9606-ENSP00000353007"/>
<dbReference type="PeptideAtlas" id="Q8IWU5"/>
<dbReference type="ProteomicsDB" id="70897">
    <molecule id="Q8IWU5-1"/>
</dbReference>
<dbReference type="ProteomicsDB" id="70898">
    <molecule id="Q8IWU5-2"/>
</dbReference>
<dbReference type="Pumba" id="Q8IWU5"/>
<dbReference type="TopDownProteomics" id="Q8IWU5-2">
    <molecule id="Q8IWU5-2"/>
</dbReference>
<dbReference type="Antibodypedia" id="1101">
    <property type="antibodies" value="335 antibodies from 33 providers"/>
</dbReference>
<dbReference type="DNASU" id="55959"/>
<dbReference type="Ensembl" id="ENST00000359930.8">
    <molecule id="Q8IWU5-1"/>
    <property type="protein sequence ID" value="ENSP00000353007.4"/>
    <property type="gene ID" value="ENSG00000196562.16"/>
</dbReference>
<dbReference type="Ensembl" id="ENST00000467815.5">
    <molecule id="Q8IWU5-2"/>
    <property type="protein sequence ID" value="ENSP00000418442.1"/>
    <property type="gene ID" value="ENSG00000196562.16"/>
</dbReference>
<dbReference type="Ensembl" id="ENST00000484875.5">
    <molecule id="Q8IWU5-1"/>
    <property type="protein sequence ID" value="ENSP00000418290.1"/>
    <property type="gene ID" value="ENSG00000196562.16"/>
</dbReference>
<dbReference type="Ensembl" id="ENST00000688720.1">
    <molecule id="Q8IWU5-1"/>
    <property type="protein sequence ID" value="ENSP00000508753.1"/>
    <property type="gene ID" value="ENSG00000196562.16"/>
</dbReference>
<dbReference type="GeneID" id="55959"/>
<dbReference type="KEGG" id="hsa:55959"/>
<dbReference type="MANE-Select" id="ENST00000688720.1">
    <property type="protein sequence ID" value="ENSP00000508753.1"/>
    <property type="RefSeq nucleotide sequence ID" value="NM_001387048.1"/>
    <property type="RefSeq protein sequence ID" value="NP_001373977.1"/>
</dbReference>
<dbReference type="UCSC" id="uc002xto.4">
    <molecule id="Q8IWU5-1"/>
    <property type="organism name" value="human"/>
</dbReference>
<dbReference type="AGR" id="HGNC:20392"/>
<dbReference type="CTD" id="55959"/>
<dbReference type="DisGeNET" id="55959"/>
<dbReference type="GeneCards" id="SULF2"/>
<dbReference type="HGNC" id="HGNC:20392">
    <property type="gene designation" value="SULF2"/>
</dbReference>
<dbReference type="HPA" id="ENSG00000196562">
    <property type="expression patterns" value="Low tissue specificity"/>
</dbReference>
<dbReference type="MIM" id="610013">
    <property type="type" value="gene"/>
</dbReference>
<dbReference type="neXtProt" id="NX_Q8IWU5"/>
<dbReference type="OpenTargets" id="ENSG00000196562"/>
<dbReference type="PharmGKB" id="PA134902131"/>
<dbReference type="VEuPathDB" id="HostDB:ENSG00000196562"/>
<dbReference type="eggNOG" id="KOG3731">
    <property type="taxonomic scope" value="Eukaryota"/>
</dbReference>
<dbReference type="GeneTree" id="ENSGT00940000159151"/>
<dbReference type="HOGENOM" id="CLU_006332_2_0_1"/>
<dbReference type="InParanoid" id="Q8IWU5"/>
<dbReference type="OMA" id="GEACACD"/>
<dbReference type="OrthoDB" id="96314at2759"/>
<dbReference type="PAN-GO" id="Q8IWU5">
    <property type="GO annotations" value="10 GO annotations based on evolutionary models"/>
</dbReference>
<dbReference type="PhylomeDB" id="Q8IWU5"/>
<dbReference type="TreeFam" id="TF313545"/>
<dbReference type="PathwayCommons" id="Q8IWU5"/>
<dbReference type="SignaLink" id="Q8IWU5"/>
<dbReference type="BioGRID-ORCS" id="55959">
    <property type="hits" value="11 hits in 1157 CRISPR screens"/>
</dbReference>
<dbReference type="ChiTaRS" id="SULF2">
    <property type="organism name" value="human"/>
</dbReference>
<dbReference type="GeneWiki" id="SULF2"/>
<dbReference type="GenomeRNAi" id="55959"/>
<dbReference type="Pharos" id="Q8IWU5">
    <property type="development level" value="Tbio"/>
</dbReference>
<dbReference type="PRO" id="PR:Q8IWU5"/>
<dbReference type="Proteomes" id="UP000005640">
    <property type="component" value="Chromosome 20"/>
</dbReference>
<dbReference type="RNAct" id="Q8IWU5">
    <property type="molecule type" value="protein"/>
</dbReference>
<dbReference type="Bgee" id="ENSG00000196562">
    <property type="expression patterns" value="Expressed in decidua and 185 other cell types or tissues"/>
</dbReference>
<dbReference type="ExpressionAtlas" id="Q8IWU5">
    <property type="expression patterns" value="baseline and differential"/>
</dbReference>
<dbReference type="GO" id="GO:0009986">
    <property type="term" value="C:cell surface"/>
    <property type="evidence" value="ECO:0000314"/>
    <property type="project" value="UniProtKB"/>
</dbReference>
<dbReference type="GO" id="GO:0005783">
    <property type="term" value="C:endoplasmic reticulum"/>
    <property type="evidence" value="ECO:0000314"/>
    <property type="project" value="UniProtKB"/>
</dbReference>
<dbReference type="GO" id="GO:0005576">
    <property type="term" value="C:extracellular region"/>
    <property type="evidence" value="ECO:0000315"/>
    <property type="project" value="UniProtKB"/>
</dbReference>
<dbReference type="GO" id="GO:0005615">
    <property type="term" value="C:extracellular space"/>
    <property type="evidence" value="ECO:0000303"/>
    <property type="project" value="UniProtKB"/>
</dbReference>
<dbReference type="GO" id="GO:0005795">
    <property type="term" value="C:Golgi stack"/>
    <property type="evidence" value="ECO:0007669"/>
    <property type="project" value="UniProtKB-SubCell"/>
</dbReference>
<dbReference type="GO" id="GO:0005886">
    <property type="term" value="C:plasma membrane"/>
    <property type="evidence" value="ECO:0000250"/>
    <property type="project" value="UniProtKB"/>
</dbReference>
<dbReference type="GO" id="GO:0004065">
    <property type="term" value="F:arylsulfatase activity"/>
    <property type="evidence" value="ECO:0000314"/>
    <property type="project" value="UniProtKB"/>
</dbReference>
<dbReference type="GO" id="GO:0005509">
    <property type="term" value="F:calcium ion binding"/>
    <property type="evidence" value="ECO:0007669"/>
    <property type="project" value="InterPro"/>
</dbReference>
<dbReference type="GO" id="GO:0005539">
    <property type="term" value="F:glycosaminoglycan binding"/>
    <property type="evidence" value="ECO:0000318"/>
    <property type="project" value="GO_Central"/>
</dbReference>
<dbReference type="GO" id="GO:0008449">
    <property type="term" value="F:N-acetylglucosamine-6-sulfatase activity"/>
    <property type="evidence" value="ECO:0000314"/>
    <property type="project" value="UniProtKB"/>
</dbReference>
<dbReference type="GO" id="GO:0060348">
    <property type="term" value="P:bone development"/>
    <property type="evidence" value="ECO:0000250"/>
    <property type="project" value="BHF-UCL"/>
</dbReference>
<dbReference type="GO" id="GO:0051216">
    <property type="term" value="P:cartilage development"/>
    <property type="evidence" value="ECO:0000250"/>
    <property type="project" value="UniProtKB"/>
</dbReference>
<dbReference type="GO" id="GO:0002063">
    <property type="term" value="P:chondrocyte development"/>
    <property type="evidence" value="ECO:0000250"/>
    <property type="project" value="UniProtKB"/>
</dbReference>
<dbReference type="GO" id="GO:0048706">
    <property type="term" value="P:embryonic skeletal system development"/>
    <property type="evidence" value="ECO:0000250"/>
    <property type="project" value="UniProtKB"/>
</dbReference>
<dbReference type="GO" id="GO:0014846">
    <property type="term" value="P:esophagus smooth muscle contraction"/>
    <property type="evidence" value="ECO:0000250"/>
    <property type="project" value="UniProtKB"/>
</dbReference>
<dbReference type="GO" id="GO:0035860">
    <property type="term" value="P:glial cell-derived neurotrophic factor receptor signaling pathway"/>
    <property type="evidence" value="ECO:0000250"/>
    <property type="project" value="UniProtKB"/>
</dbReference>
<dbReference type="GO" id="GO:0032836">
    <property type="term" value="P:glomerular basement membrane development"/>
    <property type="evidence" value="ECO:0000250"/>
    <property type="project" value="UniProtKB"/>
</dbReference>
<dbReference type="GO" id="GO:0003094">
    <property type="term" value="P:glomerular filtration"/>
    <property type="evidence" value="ECO:0000250"/>
    <property type="project" value="UniProtKB"/>
</dbReference>
<dbReference type="GO" id="GO:0030201">
    <property type="term" value="P:heparan sulfate proteoglycan metabolic process"/>
    <property type="evidence" value="ECO:0000314"/>
    <property type="project" value="UniProtKB"/>
</dbReference>
<dbReference type="GO" id="GO:0060384">
    <property type="term" value="P:innervation"/>
    <property type="evidence" value="ECO:0000250"/>
    <property type="project" value="UniProtKB"/>
</dbReference>
<dbReference type="GO" id="GO:0001822">
    <property type="term" value="P:kidney development"/>
    <property type="evidence" value="ECO:0000250"/>
    <property type="project" value="BHF-UCL"/>
</dbReference>
<dbReference type="GO" id="GO:0097421">
    <property type="term" value="P:liver regeneration"/>
    <property type="evidence" value="ECO:0007669"/>
    <property type="project" value="Ensembl"/>
</dbReference>
<dbReference type="GO" id="GO:0040037">
    <property type="term" value="P:negative regulation of fibroblast growth factor receptor signaling pathway"/>
    <property type="evidence" value="ECO:0000250"/>
    <property type="project" value="UniProtKB"/>
</dbReference>
<dbReference type="GO" id="GO:0090263">
    <property type="term" value="P:positive regulation of canonical Wnt signaling pathway"/>
    <property type="evidence" value="ECO:0007669"/>
    <property type="project" value="Ensembl"/>
</dbReference>
<dbReference type="GO" id="GO:1904472">
    <property type="term" value="P:positive regulation of endothelin production"/>
    <property type="evidence" value="ECO:0007669"/>
    <property type="project" value="Ensembl"/>
</dbReference>
<dbReference type="GO" id="GO:0010575">
    <property type="term" value="P:positive regulation of vascular endothelial growth factor production"/>
    <property type="evidence" value="ECO:0000250"/>
    <property type="project" value="UniProtKB"/>
</dbReference>
<dbReference type="GO" id="GO:0030177">
    <property type="term" value="P:positive regulation of Wnt signaling pathway"/>
    <property type="evidence" value="ECO:0000314"/>
    <property type="project" value="UniProtKB"/>
</dbReference>
<dbReference type="GO" id="GO:2000345">
    <property type="term" value="P:regulation of hepatocyte proliferation"/>
    <property type="evidence" value="ECO:0007669"/>
    <property type="project" value="Ensembl"/>
</dbReference>
<dbReference type="GO" id="GO:0009611">
    <property type="term" value="P:response to wounding"/>
    <property type="evidence" value="ECO:0007669"/>
    <property type="project" value="Ensembl"/>
</dbReference>
<dbReference type="CDD" id="cd16147">
    <property type="entry name" value="G6S"/>
    <property type="match status" value="1"/>
</dbReference>
<dbReference type="FunFam" id="3.40.720.10:FF:000003">
    <property type="entry name" value="Extracellular sulfatase"/>
    <property type="match status" value="1"/>
</dbReference>
<dbReference type="Gene3D" id="3.40.720.10">
    <property type="entry name" value="Alkaline Phosphatase, subunit A"/>
    <property type="match status" value="1"/>
</dbReference>
<dbReference type="InterPro" id="IPR017850">
    <property type="entry name" value="Alkaline_phosphatase_core_sf"/>
</dbReference>
<dbReference type="InterPro" id="IPR014615">
    <property type="entry name" value="Extracellular_sulfatase"/>
</dbReference>
<dbReference type="InterPro" id="IPR024609">
    <property type="entry name" value="Extracellular_sulfatase_C"/>
</dbReference>
<dbReference type="InterPro" id="IPR024607">
    <property type="entry name" value="Sulfatase_CS"/>
</dbReference>
<dbReference type="InterPro" id="IPR000917">
    <property type="entry name" value="Sulfatase_N"/>
</dbReference>
<dbReference type="PANTHER" id="PTHR43108:SF4">
    <property type="entry name" value="EXTRACELLULAR SULFATASE SULF-2"/>
    <property type="match status" value="1"/>
</dbReference>
<dbReference type="PANTHER" id="PTHR43108">
    <property type="entry name" value="N-ACETYLGLUCOSAMINE-6-SULFATASE FAMILY MEMBER"/>
    <property type="match status" value="1"/>
</dbReference>
<dbReference type="Pfam" id="PF12548">
    <property type="entry name" value="DUF3740"/>
    <property type="match status" value="1"/>
</dbReference>
<dbReference type="Pfam" id="PF00884">
    <property type="entry name" value="Sulfatase"/>
    <property type="match status" value="1"/>
</dbReference>
<dbReference type="PIRSF" id="PIRSF036665">
    <property type="entry name" value="Sulf1"/>
    <property type="match status" value="1"/>
</dbReference>
<dbReference type="SUPFAM" id="SSF53649">
    <property type="entry name" value="Alkaline phosphatase-like"/>
    <property type="match status" value="2"/>
</dbReference>
<dbReference type="PROSITE" id="PS00523">
    <property type="entry name" value="SULFATASE_1"/>
    <property type="match status" value="1"/>
</dbReference>
<keyword id="KW-0025">Alternative splicing</keyword>
<keyword id="KW-0106">Calcium</keyword>
<keyword id="KW-0256">Endoplasmic reticulum</keyword>
<keyword id="KW-0325">Glycoprotein</keyword>
<keyword id="KW-0333">Golgi apparatus</keyword>
<keyword id="KW-0378">Hydrolase</keyword>
<keyword id="KW-0479">Metal-binding</keyword>
<keyword id="KW-0654">Proteoglycan</keyword>
<keyword id="KW-1267">Proteomics identification</keyword>
<keyword id="KW-1185">Reference proteome</keyword>
<keyword id="KW-0964">Secreted</keyword>
<keyword id="KW-0732">Signal</keyword>
<proteinExistence type="evidence at protein level"/>
<accession>Q8IWU5</accession>
<accession>E1P5U6</accession>
<accession>Q5JYE1</accession>
<accession>Q6UX86</accession>
<accession>Q96SG2</accession>
<accession>Q9H1H0</accession>
<accession>Q9UJR3</accession>
<accession>Q9ULH3</accession>
<feature type="signal peptide" evidence="3">
    <location>
        <begin position="1"/>
        <end position="24"/>
    </location>
</feature>
<feature type="chain" id="PRO_0000033440" description="Extracellular sulfatase Sulf-2">
    <location>
        <begin position="25"/>
        <end position="870"/>
    </location>
</feature>
<feature type="chain" id="PRO_0000457759" description="Extracellular sulfatase Sulf-2 secreted form" evidence="9">
    <location>
        <begin position="539"/>
        <end position="870"/>
    </location>
</feature>
<feature type="region of interest" description="Catalytic domain; necessary for arylsulfatase activity" evidence="9">
    <location>
        <begin position="1"/>
        <end position="415"/>
    </location>
</feature>
<feature type="region of interest" description="Hydrophilic domain; necessary for endoglucosamine-6-sulfatase activity" evidence="9">
    <location>
        <begin position="416"/>
        <end position="715"/>
    </location>
</feature>
<feature type="region of interest" description="Disordered" evidence="4">
    <location>
        <begin position="560"/>
        <end position="588"/>
    </location>
</feature>
<feature type="active site" description="Nucleophile" evidence="1">
    <location>
        <position position="88"/>
    </location>
</feature>
<feature type="binding site" evidence="1">
    <location>
        <position position="52"/>
    </location>
    <ligand>
        <name>Ca(2+)</name>
        <dbReference type="ChEBI" id="CHEBI:29108"/>
    </ligand>
</feature>
<feature type="binding site" evidence="1">
    <location>
        <position position="53"/>
    </location>
    <ligand>
        <name>Ca(2+)</name>
        <dbReference type="ChEBI" id="CHEBI:29108"/>
    </ligand>
</feature>
<feature type="binding site" description="via 3-oxoalanine" evidence="1">
    <location>
        <position position="88"/>
    </location>
    <ligand>
        <name>Ca(2+)</name>
        <dbReference type="ChEBI" id="CHEBI:29108"/>
    </ligand>
</feature>
<feature type="binding site" evidence="1">
    <location>
        <position position="317"/>
    </location>
    <ligand>
        <name>Ca(2+)</name>
        <dbReference type="ChEBI" id="CHEBI:29108"/>
    </ligand>
</feature>
<feature type="binding site" evidence="1">
    <location>
        <position position="318"/>
    </location>
    <ligand>
        <name>Ca(2+)</name>
        <dbReference type="ChEBI" id="CHEBI:29108"/>
    </ligand>
</feature>
<feature type="site" description="Cleavage; by furin" evidence="9">
    <location>
        <begin position="538"/>
        <end position="539"/>
    </location>
</feature>
<feature type="modified residue" description="3-oxoalanine (Cys)" evidence="1">
    <location>
        <position position="88"/>
    </location>
</feature>
<feature type="glycosylation site" description="N-linked (GlcNAc...) asparagine" evidence="3">
    <location>
        <position position="65"/>
    </location>
</feature>
<feature type="glycosylation site" description="N-linked (GlcNAc...) asparagine" evidence="3">
    <location>
        <position position="112"/>
    </location>
</feature>
<feature type="glycosylation site" description="N-linked (GlcNAc...) asparagine" evidence="3">
    <location>
        <position position="132"/>
    </location>
</feature>
<feature type="glycosylation site" description="N-linked (GlcNAc...) asparagine" evidence="3">
    <location>
        <position position="149"/>
    </location>
</feature>
<feature type="glycosylation site" description="N-linked (GlcNAc...) asparagine" evidence="3">
    <location>
        <position position="171"/>
    </location>
</feature>
<feature type="glycosylation site" description="N-linked (GlcNAc...) asparagine" evidence="8">
    <location>
        <position position="198"/>
    </location>
</feature>
<feature type="glycosylation site" description="N-linked (GlcNAc...) asparagine" evidence="3">
    <location>
        <position position="241"/>
    </location>
</feature>
<feature type="glycosylation site" description="N-linked (GlcNAc...) asparagine" evidence="3">
    <location>
        <position position="561"/>
    </location>
</feature>
<feature type="glycosylation site" description="O-linked (Xyl...) (chondroitin sulfate) serine" evidence="10">
    <location>
        <position position="583"/>
    </location>
</feature>
<feature type="glycosylation site" description="N-linked (GlcNAc...) asparagine" evidence="3">
    <location>
        <position position="608"/>
    </location>
</feature>
<feature type="glycosylation site" description="N-linked (GlcNAc...) asparagine" evidence="3">
    <location>
        <position position="717"/>
    </location>
</feature>
<feature type="glycosylation site" description="N-linked (GlcNAc...) asparagine" evidence="3">
    <location>
        <position position="754"/>
    </location>
</feature>
<feature type="glycosylation site" description="N-linked (GlcNAc...) asparagine" evidence="3">
    <location>
        <position position="764"/>
    </location>
</feature>
<feature type="splice variant" id="VSP_013362" description="In isoform 2." evidence="12">
    <location>
        <begin position="832"/>
        <end position="834"/>
    </location>
</feature>
<feature type="sequence variant" id="VAR_061885" description="In dbSNP:rs56218501." evidence="5">
    <original>A</original>
    <variation>T</variation>
    <location>
        <position position="76"/>
    </location>
</feature>
<feature type="sequence variant" id="VAR_036494" description="In a breast cancer sample; somatic mutation." evidence="7">
    <original>Y</original>
    <variation>H</variation>
    <location>
        <position position="531"/>
    </location>
</feature>
<feature type="sequence variant" id="VAR_036495" description="In a breast cancer sample; somatic mutation." evidence="7">
    <original>D</original>
    <variation>N</variation>
    <location>
        <position position="573"/>
    </location>
</feature>
<feature type="sequence variant" id="VAR_052518" description="In dbSNP:rs10048853.">
    <original>R</original>
    <variation>H</variation>
    <location>
        <position position="674"/>
    </location>
</feature>
<feature type="mutagenesis site" description="Loss of arylsulfatase activity." evidence="6">
    <original>CC</original>
    <variation>AA</variation>
    <location>
        <begin position="88"/>
        <end position="89"/>
    </location>
</feature>
<feature type="mutagenesis site" description="No effect on N-acetylglucosamine-6-sulfatase activity. Significant loss of N-acetylglucosamine-6-sulfatase activity; when associated with 402-A--A-404." evidence="9">
    <original>KEK</original>
    <variation>AEA</variation>
    <location>
        <begin position="180"/>
        <end position="182"/>
    </location>
</feature>
<feature type="mutagenesis site" description="No effect on N-acetylglucosamine-6-sulfatase activity. Significant loss of N-acetylglucosamine-6-sulfatase activity; when associated with 180-A--A-182." evidence="9">
    <original>KKK</original>
    <variation>AAA</variation>
    <location>
        <begin position="402"/>
        <end position="404"/>
    </location>
</feature>
<protein>
    <recommendedName>
        <fullName>Extracellular sulfatase Sulf-2</fullName>
        <shortName>hSulf-2</shortName>
    </recommendedName>
    <alternativeName>
        <fullName>Arylsulfatase</fullName>
        <ecNumber evidence="6 9 10">3.1.6.1</ecNumber>
    </alternativeName>
    <alternativeName>
        <fullName>N-acetylglucosamine-6-sulfatase</fullName>
        <ecNumber evidence="6 9 10">3.1.6.14</ecNumber>
    </alternativeName>
    <component>
        <recommendedName>
            <fullName evidence="11 13">Extracellular sulfatase Sulf-2 secreted form</fullName>
        </recommendedName>
    </component>
</protein>
<reference key="1">
    <citation type="journal article" date="2002" name="J. Biol. Chem.">
        <title>Cloning and characterization of two extracellular heparin-degrading endosulfatases in mice and humans.</title>
        <authorList>
            <person name="Morimoto-Tomita M."/>
            <person name="Uchimura K."/>
            <person name="Werb Z."/>
            <person name="Hemmerich S."/>
            <person name="Rosen S.D."/>
        </authorList>
    </citation>
    <scope>NUCLEOTIDE SEQUENCE [MRNA] (ISOFORM 1)</scope>
    <scope>MUTAGENESIS OF 88-CYS-CYS-89</scope>
    <scope>FUNCTION</scope>
    <scope>CATALYTIC ACTIVITY</scope>
    <scope>BIOPHYSICOCHEMICAL PROPERTIES</scope>
    <scope>PROTEOLYTIC CLEAVAGE</scope>
    <scope>TISSUE SPECIFICITY</scope>
    <scope>SUBCELLULAR LOCATION</scope>
    <source>
        <tissue>Lung</tissue>
    </source>
</reference>
<reference key="2">
    <citation type="journal article" date="1999" name="DNA Res.">
        <title>Prediction of the coding sequences of unidentified human genes. XV. The complete sequences of 100 new cDNA clones from brain which code for large proteins in vitro.</title>
        <authorList>
            <person name="Nagase T."/>
            <person name="Ishikawa K."/>
            <person name="Kikuno R."/>
            <person name="Hirosawa M."/>
            <person name="Nomura N."/>
            <person name="Ohara O."/>
        </authorList>
    </citation>
    <scope>NUCLEOTIDE SEQUENCE [LARGE SCALE MRNA] (ISOFORM 1)</scope>
    <scope>VARIANT THR-76</scope>
    <source>
        <tissue>Brain</tissue>
    </source>
</reference>
<reference key="3">
    <citation type="journal article" date="2002" name="DNA Res.">
        <title>Construction of expression-ready cDNA clones for KIAA genes: manual curation of 330 KIAA cDNA clones.</title>
        <authorList>
            <person name="Nakajima D."/>
            <person name="Okazaki N."/>
            <person name="Yamakawa H."/>
            <person name="Kikuno R."/>
            <person name="Ohara O."/>
            <person name="Nagase T."/>
        </authorList>
    </citation>
    <scope>SEQUENCE REVISION</scope>
</reference>
<reference key="4">
    <citation type="journal article" date="2003" name="Genome Res.">
        <title>The secreted protein discovery initiative (SPDI), a large-scale effort to identify novel human secreted and transmembrane proteins: a bioinformatics assessment.</title>
        <authorList>
            <person name="Clark H.F."/>
            <person name="Gurney A.L."/>
            <person name="Abaya E."/>
            <person name="Baker K."/>
            <person name="Baldwin D.T."/>
            <person name="Brush J."/>
            <person name="Chen J."/>
            <person name="Chow B."/>
            <person name="Chui C."/>
            <person name="Crowley C."/>
            <person name="Currell B."/>
            <person name="Deuel B."/>
            <person name="Dowd P."/>
            <person name="Eaton D."/>
            <person name="Foster J.S."/>
            <person name="Grimaldi C."/>
            <person name="Gu Q."/>
            <person name="Hass P.E."/>
            <person name="Heldens S."/>
            <person name="Huang A."/>
            <person name="Kim H.S."/>
            <person name="Klimowski L."/>
            <person name="Jin Y."/>
            <person name="Johnson S."/>
            <person name="Lee J."/>
            <person name="Lewis L."/>
            <person name="Liao D."/>
            <person name="Mark M.R."/>
            <person name="Robbie E."/>
            <person name="Sanchez C."/>
            <person name="Schoenfeld J."/>
            <person name="Seshagiri S."/>
            <person name="Simmons L."/>
            <person name="Singh J."/>
            <person name="Smith V."/>
            <person name="Stinson J."/>
            <person name="Vagts A."/>
            <person name="Vandlen R.L."/>
            <person name="Watanabe C."/>
            <person name="Wieand D."/>
            <person name="Woods K."/>
            <person name="Xie M.-H."/>
            <person name="Yansura D.G."/>
            <person name="Yi S."/>
            <person name="Yu G."/>
            <person name="Yuan J."/>
            <person name="Zhang M."/>
            <person name="Zhang Z."/>
            <person name="Goddard A.D."/>
            <person name="Wood W.I."/>
            <person name="Godowski P.J."/>
            <person name="Gray A.M."/>
        </authorList>
    </citation>
    <scope>NUCLEOTIDE SEQUENCE [LARGE SCALE MRNA] (ISOFORM 2)</scope>
</reference>
<reference key="5">
    <citation type="journal article" date="2007" name="BMC Genomics">
        <title>The full-ORF clone resource of the German cDNA consortium.</title>
        <authorList>
            <person name="Bechtel S."/>
            <person name="Rosenfelder H."/>
            <person name="Duda A."/>
            <person name="Schmidt C.P."/>
            <person name="Ernst U."/>
            <person name="Wellenreuther R."/>
            <person name="Mehrle A."/>
            <person name="Schuster C."/>
            <person name="Bahr A."/>
            <person name="Bloecker H."/>
            <person name="Heubner D."/>
            <person name="Hoerlein A."/>
            <person name="Michel G."/>
            <person name="Wedler H."/>
            <person name="Koehrer K."/>
            <person name="Ottenwaelder B."/>
            <person name="Poustka A."/>
            <person name="Wiemann S."/>
            <person name="Schupp I."/>
        </authorList>
    </citation>
    <scope>NUCLEOTIDE SEQUENCE [LARGE SCALE MRNA] (ISOFORM 1)</scope>
    <source>
        <tissue>Fetal skin</tissue>
    </source>
</reference>
<reference key="6">
    <citation type="journal article" date="2001" name="Nature">
        <title>The DNA sequence and comparative analysis of human chromosome 20.</title>
        <authorList>
            <person name="Deloukas P."/>
            <person name="Matthews L.H."/>
            <person name="Ashurst J.L."/>
            <person name="Burton J."/>
            <person name="Gilbert J.G.R."/>
            <person name="Jones M."/>
            <person name="Stavrides G."/>
            <person name="Almeida J.P."/>
            <person name="Babbage A.K."/>
            <person name="Bagguley C.L."/>
            <person name="Bailey J."/>
            <person name="Barlow K.F."/>
            <person name="Bates K.N."/>
            <person name="Beard L.M."/>
            <person name="Beare D.M."/>
            <person name="Beasley O.P."/>
            <person name="Bird C.P."/>
            <person name="Blakey S.E."/>
            <person name="Bridgeman A.M."/>
            <person name="Brown A.J."/>
            <person name="Buck D."/>
            <person name="Burrill W.D."/>
            <person name="Butler A.P."/>
            <person name="Carder C."/>
            <person name="Carter N.P."/>
            <person name="Chapman J.C."/>
            <person name="Clamp M."/>
            <person name="Clark G."/>
            <person name="Clark L.N."/>
            <person name="Clark S.Y."/>
            <person name="Clee C.M."/>
            <person name="Clegg S."/>
            <person name="Cobley V.E."/>
            <person name="Collier R.E."/>
            <person name="Connor R.E."/>
            <person name="Corby N.R."/>
            <person name="Coulson A."/>
            <person name="Coville G.J."/>
            <person name="Deadman R."/>
            <person name="Dhami P.D."/>
            <person name="Dunn M."/>
            <person name="Ellington A.G."/>
            <person name="Frankland J.A."/>
            <person name="Fraser A."/>
            <person name="French L."/>
            <person name="Garner P."/>
            <person name="Grafham D.V."/>
            <person name="Griffiths C."/>
            <person name="Griffiths M.N.D."/>
            <person name="Gwilliam R."/>
            <person name="Hall R.E."/>
            <person name="Hammond S."/>
            <person name="Harley J.L."/>
            <person name="Heath P.D."/>
            <person name="Ho S."/>
            <person name="Holden J.L."/>
            <person name="Howden P.J."/>
            <person name="Huckle E."/>
            <person name="Hunt A.R."/>
            <person name="Hunt S.E."/>
            <person name="Jekosch K."/>
            <person name="Johnson C.M."/>
            <person name="Johnson D."/>
            <person name="Kay M.P."/>
            <person name="Kimberley A.M."/>
            <person name="King A."/>
            <person name="Knights A."/>
            <person name="Laird G.K."/>
            <person name="Lawlor S."/>
            <person name="Lehvaeslaiho M.H."/>
            <person name="Leversha M.A."/>
            <person name="Lloyd C."/>
            <person name="Lloyd D.M."/>
            <person name="Lovell J.D."/>
            <person name="Marsh V.L."/>
            <person name="Martin S.L."/>
            <person name="McConnachie L.J."/>
            <person name="McLay K."/>
            <person name="McMurray A.A."/>
            <person name="Milne S.A."/>
            <person name="Mistry D."/>
            <person name="Moore M.J.F."/>
            <person name="Mullikin J.C."/>
            <person name="Nickerson T."/>
            <person name="Oliver K."/>
            <person name="Parker A."/>
            <person name="Patel R."/>
            <person name="Pearce T.A.V."/>
            <person name="Peck A.I."/>
            <person name="Phillimore B.J.C.T."/>
            <person name="Prathalingam S.R."/>
            <person name="Plumb R.W."/>
            <person name="Ramsay H."/>
            <person name="Rice C.M."/>
            <person name="Ross M.T."/>
            <person name="Scott C.E."/>
            <person name="Sehra H.K."/>
            <person name="Shownkeen R."/>
            <person name="Sims S."/>
            <person name="Skuce C.D."/>
            <person name="Smith M.L."/>
            <person name="Soderlund C."/>
            <person name="Steward C.A."/>
            <person name="Sulston J.E."/>
            <person name="Swann R.M."/>
            <person name="Sycamore N."/>
            <person name="Taylor R."/>
            <person name="Tee L."/>
            <person name="Thomas D.W."/>
            <person name="Thorpe A."/>
            <person name="Tracey A."/>
            <person name="Tromans A.C."/>
            <person name="Vaudin M."/>
            <person name="Wall M."/>
            <person name="Wallis J.M."/>
            <person name="Whitehead S.L."/>
            <person name="Whittaker P."/>
            <person name="Willey D.L."/>
            <person name="Williams L."/>
            <person name="Williams S.A."/>
            <person name="Wilming L."/>
            <person name="Wray P.W."/>
            <person name="Hubbard T."/>
            <person name="Durbin R.M."/>
            <person name="Bentley D.R."/>
            <person name="Beck S."/>
            <person name="Rogers J."/>
        </authorList>
    </citation>
    <scope>NUCLEOTIDE SEQUENCE [LARGE SCALE GENOMIC DNA]</scope>
</reference>
<reference key="7">
    <citation type="submission" date="2005-09" db="EMBL/GenBank/DDBJ databases">
        <authorList>
            <person name="Mural R.J."/>
            <person name="Istrail S."/>
            <person name="Sutton G.G."/>
            <person name="Florea L."/>
            <person name="Halpern A.L."/>
            <person name="Mobarry C.M."/>
            <person name="Lippert R."/>
            <person name="Walenz B."/>
            <person name="Shatkay H."/>
            <person name="Dew I."/>
            <person name="Miller J.R."/>
            <person name="Flanigan M.J."/>
            <person name="Edwards N.J."/>
            <person name="Bolanos R."/>
            <person name="Fasulo D."/>
            <person name="Halldorsson B.V."/>
            <person name="Hannenhalli S."/>
            <person name="Turner R."/>
            <person name="Yooseph S."/>
            <person name="Lu F."/>
            <person name="Nusskern D.R."/>
            <person name="Shue B.C."/>
            <person name="Zheng X.H."/>
            <person name="Zhong F."/>
            <person name="Delcher A.L."/>
            <person name="Huson D.H."/>
            <person name="Kravitz S.A."/>
            <person name="Mouchard L."/>
            <person name="Reinert K."/>
            <person name="Remington K.A."/>
            <person name="Clark A.G."/>
            <person name="Waterman M.S."/>
            <person name="Eichler E.E."/>
            <person name="Adams M.D."/>
            <person name="Hunkapiller M.W."/>
            <person name="Myers E.W."/>
            <person name="Venter J.C."/>
        </authorList>
    </citation>
    <scope>NUCLEOTIDE SEQUENCE [LARGE SCALE GENOMIC DNA]</scope>
</reference>
<reference key="8">
    <citation type="journal article" date="2004" name="Genome Res.">
        <title>The status, quality, and expansion of the NIH full-length cDNA project: the Mammalian Gene Collection (MGC).</title>
        <authorList>
            <consortium name="The MGC Project Team"/>
        </authorList>
    </citation>
    <scope>NUCLEOTIDE SEQUENCE [LARGE SCALE MRNA] (ISOFORM 1)</scope>
    <source>
        <tissue>Colon</tissue>
    </source>
</reference>
<reference key="9">
    <citation type="submission" date="1999-11" db="EMBL/GenBank/DDBJ databases">
        <authorList>
            <person name="Stavrides G.S."/>
            <person name="Huckle E.J."/>
            <person name="Deloukas P."/>
        </authorList>
    </citation>
    <scope>NUCLEOTIDE SEQUENCE [MRNA] OF 527-870 (ISOFORM 1)</scope>
</reference>
<reference key="10">
    <citation type="journal article" date="2009" name="J. Proteome Res.">
        <title>Glycoproteomics analysis of human liver tissue by combination of multiple enzyme digestion and hydrazide chemistry.</title>
        <authorList>
            <person name="Chen R."/>
            <person name="Jiang X."/>
            <person name="Sun D."/>
            <person name="Han G."/>
            <person name="Wang F."/>
            <person name="Ye M."/>
            <person name="Wang L."/>
            <person name="Zou H."/>
        </authorList>
    </citation>
    <scope>GLYCOSYLATION [LARGE SCALE ANALYSIS] AT ASN-198</scope>
    <source>
        <tissue>Liver</tissue>
    </source>
</reference>
<reference key="11">
    <citation type="journal article" date="2019" name="Cell. Mol. Life Sci.">
        <title>Expression and purification of recombinant extracellular sulfatase HSulf-2 allows deciphering of enzyme sub-domain coordinated role for the binding and 6-O-desulfation of heparan sulfate.</title>
        <authorList>
            <person name="Seffouh A."/>
            <person name="El Masri R."/>
            <person name="Makshakova O."/>
            <person name="Gout E."/>
            <person name="Hassoun Z.E.O."/>
            <person name="Andrieu J.P."/>
            <person name="Lortat-Jacob H."/>
            <person name="Vives R.R."/>
        </authorList>
    </citation>
    <scope>FUNCTION</scope>
    <scope>CATALYTIC ACTIVITY</scope>
    <scope>PROTEOLYTIC CLEAVAGE</scope>
    <scope>CLEAVAGE SITE</scope>
    <scope>REGION CATALYTIC DOMAIN</scope>
    <scope>REGION HYDROPHILIC DOMAIN</scope>
    <scope>SUBCELLULAR LOCATION</scope>
    <scope>MUTAGENESIS OF 180-LYS--LYS-182 AND 402-LYS--LYS-404</scope>
</reference>
<reference key="12">
    <citation type="journal article" date="2022" name="Cell Rep.">
        <title>Extracellular endosulfatase Sulf-2 harbors a chondroitin/dermatan sulfate chain that modulates its enzyme activity.</title>
        <authorList>
            <person name="El Masri R."/>
            <person name="Seffouh A."/>
            <person name="Roelants C."/>
            <person name="Seffouh I."/>
            <person name="Gout E."/>
            <person name="Perard J."/>
            <person name="Dalonneau F."/>
            <person name="Nishitsuji K."/>
            <person name="Noborn F."/>
            <person name="Nikpour M."/>
            <person name="Larson G."/>
            <person name="Cretinon Y."/>
            <person name="Friedel-Arboleas M."/>
            <person name="Uchimura K."/>
            <person name="Daniel R."/>
            <person name="Lortat-Jacob H."/>
            <person name="Filhol O."/>
            <person name="Vives R.R."/>
        </authorList>
    </citation>
    <scope>FUNCTION</scope>
    <scope>CATALYTIC ACTIVITY</scope>
    <scope>SUBCELLULAR LOCATION</scope>
    <scope>PROTEOLYTIC CLEAVAGE</scope>
    <scope>GLYCOSYLATION AT SER-583</scope>
</reference>
<reference key="13">
    <citation type="journal article" date="2006" name="Science">
        <title>The consensus coding sequences of human breast and colorectal cancers.</title>
        <authorList>
            <person name="Sjoeblom T."/>
            <person name="Jones S."/>
            <person name="Wood L.D."/>
            <person name="Parsons D.W."/>
            <person name="Lin J."/>
            <person name="Barber T.D."/>
            <person name="Mandelker D."/>
            <person name="Leary R.J."/>
            <person name="Ptak J."/>
            <person name="Silliman N."/>
            <person name="Szabo S."/>
            <person name="Buckhaults P."/>
            <person name="Farrell C."/>
            <person name="Meeh P."/>
            <person name="Markowitz S.D."/>
            <person name="Willis J."/>
            <person name="Dawson D."/>
            <person name="Willson J.K.V."/>
            <person name="Gazdar A.F."/>
            <person name="Hartigan J."/>
            <person name="Wu L."/>
            <person name="Liu C."/>
            <person name="Parmigiani G."/>
            <person name="Park B.H."/>
            <person name="Bachman K.E."/>
            <person name="Papadopoulos N."/>
            <person name="Vogelstein B."/>
            <person name="Kinzler K.W."/>
            <person name="Velculescu V.E."/>
        </authorList>
    </citation>
    <scope>VARIANTS [LARGE SCALE ANALYSIS] HIS-531 AND ASN-573</scope>
</reference>
<evidence type="ECO:0000250" key="1">
    <source>
        <dbReference type="UniProtKB" id="P15289"/>
    </source>
</evidence>
<evidence type="ECO:0000250" key="2">
    <source>
        <dbReference type="UniProtKB" id="Q8VI60"/>
    </source>
</evidence>
<evidence type="ECO:0000255" key="3"/>
<evidence type="ECO:0000256" key="4">
    <source>
        <dbReference type="SAM" id="MobiDB-lite"/>
    </source>
</evidence>
<evidence type="ECO:0000269" key="5">
    <source>
    </source>
</evidence>
<evidence type="ECO:0000269" key="6">
    <source>
    </source>
</evidence>
<evidence type="ECO:0000269" key="7">
    <source>
    </source>
</evidence>
<evidence type="ECO:0000269" key="8">
    <source>
    </source>
</evidence>
<evidence type="ECO:0000269" key="9">
    <source>
    </source>
</evidence>
<evidence type="ECO:0000269" key="10">
    <source>
    </source>
</evidence>
<evidence type="ECO:0000303" key="11">
    <source>
    </source>
</evidence>
<evidence type="ECO:0000303" key="12">
    <source>
    </source>
</evidence>
<evidence type="ECO:0000303" key="13">
    <source>
    </source>
</evidence>
<evidence type="ECO:0000305" key="14"/>
<organism>
    <name type="scientific">Homo sapiens</name>
    <name type="common">Human</name>
    <dbReference type="NCBI Taxonomy" id="9606"/>
    <lineage>
        <taxon>Eukaryota</taxon>
        <taxon>Metazoa</taxon>
        <taxon>Chordata</taxon>
        <taxon>Craniata</taxon>
        <taxon>Vertebrata</taxon>
        <taxon>Euteleostomi</taxon>
        <taxon>Mammalia</taxon>
        <taxon>Eutheria</taxon>
        <taxon>Euarchontoglires</taxon>
        <taxon>Primates</taxon>
        <taxon>Haplorrhini</taxon>
        <taxon>Catarrhini</taxon>
        <taxon>Hominidae</taxon>
        <taxon>Homo</taxon>
    </lineage>
</organism>
<sequence length="870" mass="100455">MGPPSLVLCLLSATVFSLLGGSSAFLSHHRLKGRFQRDRRNIRPNIILVLTDDQDVELGSMQVMNKTRRIMEQGGAHFINAFVTTPMCCPSRSSILTGKYVHNHNTYTNNENCSSPSWQAQHESRTFAVYLNSTGYRTAFFGKYLNEYNGSYVPPGWKEWVGLLKNSRFYNYTLCRNGVKEKHGSDYSKDYLTDLITNDSVSFFRTSKKMYPHRPVLMVISHAAPHGPEDSAPQYSRLFPNASQHITPSYNYAPNPDKHWIMRYTGPMKPIHMEFTNMLQRKRLQTLMSVDDSMETIYNMLVETGELDNTYIVYTADHGYHIGQFGLVKGKSMPYEFDIRVPFYVRGPNVEAGCLNPHIVLNIDLAPTILDIAGLDIPADMDGKSILKLLDTERPVNRFHLKKKMRVWRDSFLVERGKLLHKRDNDKVDAQEENFLPKYQRVKDLCQRAEYQTACEQLGQKWQCVEDATGKLKLHKCKGPMRLGGSRALSNLVPKYYGQGSEACTCDSGDYKLSLAGRRKKLFKKKYKASYVRSRSIRSVAIEVDGRVYHVGLGDAAQPRNLTKRHWPGAPEDQDDKDGGDFSGTGGLPDYSAANPIKVTHRCYILENDTVQCDLDLYKSLQAWKDHKLHIDHEIETLQNKIKNLREVRGHLKKKRPEECDCHKISYHTQHKGRLKHRGSSLHPFRKGLQEKDKVWLLREQKRKKKLRKLLKRLQNNDTCSMPGLTCFTHDNQHWQTAPFWTLGPFCACTSANNNTYWCMRTINETHNFLFCEFATGFLEYFDLNTDPYQLMNAVNTLDRDVLNQLHVQLMELRSCKGYKQCNPRTRNMDLGLKDGGSYEQYRQFQRRKWPEMKRPSSKSLGQLWEGWEG</sequence>
<gene>
    <name type="primary">SULF2</name>
    <name type="synonym">KIAA1247</name>
    <name type="ORF">UNQ559/PRO1120</name>
</gene>
<comment type="function">
    <text evidence="6 9 10">Exhibits arylsulfatase activity and highly specific endoglucosamine-6-sulfatase activity (PubMed:12368295, PubMed:30788513, PubMed:35294879). It can remove sulfate from the C-6 position of glucosamine within specific subregions of intact heparin (PubMed:12368295, PubMed:30788513, PubMed:35294879).</text>
</comment>
<comment type="catalytic activity">
    <reaction evidence="6 9 10">
        <text>an aryl sulfate + H2O = a phenol + sulfate + H(+)</text>
        <dbReference type="Rhea" id="RHEA:17261"/>
        <dbReference type="ChEBI" id="CHEBI:15377"/>
        <dbReference type="ChEBI" id="CHEBI:15378"/>
        <dbReference type="ChEBI" id="CHEBI:16189"/>
        <dbReference type="ChEBI" id="CHEBI:33853"/>
        <dbReference type="ChEBI" id="CHEBI:140317"/>
        <dbReference type="EC" id="3.1.6.1"/>
    </reaction>
</comment>
<comment type="catalytic activity">
    <reaction evidence="6 9 10">
        <text>Hydrolysis of the 6-sulfate groups of the N-acetyl-D-glucosamine 6-sulfate units of heparan sulfate and keratan sulfate.</text>
        <dbReference type="EC" id="3.1.6.14"/>
    </reaction>
</comment>
<comment type="cofactor">
    <cofactor evidence="1">
        <name>Ca(2+)</name>
        <dbReference type="ChEBI" id="CHEBI:29108"/>
    </cofactor>
    <text evidence="1">Binds 1 Ca(2+) ion per subunit.</text>
</comment>
<comment type="biophysicochemical properties">
    <phDependence>
        <text evidence="6">Optimum pH is 7.0-8.0. for arylsulfatase activity.</text>
    </phDependence>
</comment>
<comment type="subcellular location">
    <subcellularLocation>
        <location evidence="2">Endoplasmic reticulum</location>
    </subcellularLocation>
    <subcellularLocation>
        <location evidence="2">Golgi apparatus</location>
        <location evidence="2">Golgi stack</location>
    </subcellularLocation>
    <subcellularLocation>
        <location evidence="6 10">Cell surface</location>
    </subcellularLocation>
</comment>
<comment type="subcellular location">
    <molecule>Extracellular sulfatase Sulf-2 secreted form</molecule>
    <subcellularLocation>
        <location evidence="6 9 10">Secreted</location>
    </subcellularLocation>
</comment>
<comment type="alternative products">
    <event type="alternative splicing"/>
    <isoform>
        <id>Q8IWU5-1</id>
        <name>1</name>
        <sequence type="displayed"/>
    </isoform>
    <isoform>
        <id>Q8IWU5-2</id>
        <name>2</name>
        <sequence type="described" ref="VSP_013362"/>
    </isoform>
</comment>
<comment type="tissue specificity">
    <text evidence="6">Expressed at highest levels in the ovary, skeletal muscle, stomach, brain, uterus, heart, kidney and placenta.</text>
</comment>
<comment type="PTM">
    <text evidence="6 9 10">Processing by furin produces a secreted form.</text>
</comment>
<comment type="PTM">
    <text evidence="10">Glycosylation at Ser-583 negatively regulates its N-acetylglucosamine-6-sulfatase and arylsulfatase activities.</text>
</comment>
<comment type="PTM">
    <text evidence="1">The conversion to 3-oxoalanine (also known as C-formylglycine, FGly), of a serine or cysteine residue in prokaryotes and of a cysteine residue in eukaryotes, is critical for catalytic activity.</text>
</comment>
<comment type="miscellaneous">
    <molecule>Isoform 2</molecule>
    <text evidence="14">May be due to a competing acceptor splice site.</text>
</comment>
<comment type="similarity">
    <text evidence="14">Belongs to the sulfatase family.</text>
</comment>
<comment type="sequence caution" evidence="14">
    <conflict type="erroneous initiation">
        <sequence resource="EMBL-CDS" id="AAH20962"/>
    </conflict>
    <text>Truncated N-terminus.</text>
</comment>
<comment type="sequence caution" evidence="14">
    <conflict type="erroneous initiation">
        <sequence resource="EMBL-CDS" id="BAA86561"/>
    </conflict>
    <text>Extended N-terminus.</text>
</comment>
<comment type="sequence caution" evidence="14">
    <conflict type="erroneous initiation">
        <sequence resource="EMBL-CDS" id="CAB61349"/>
    </conflict>
    <text>Truncated N-terminus.</text>
</comment>
<name>SULF2_HUMAN</name>